<evidence type="ECO:0000255" key="1">
    <source>
        <dbReference type="HAMAP-Rule" id="MF_00519"/>
    </source>
</evidence>
<accession>A7ZW12</accession>
<feature type="chain" id="PRO_1000060913" description="L-arabinose isomerase">
    <location>
        <begin position="1"/>
        <end position="500"/>
    </location>
</feature>
<feature type="binding site" evidence="1">
    <location>
        <position position="306"/>
    </location>
    <ligand>
        <name>Mn(2+)</name>
        <dbReference type="ChEBI" id="CHEBI:29035"/>
    </ligand>
</feature>
<feature type="binding site" evidence="1">
    <location>
        <position position="333"/>
    </location>
    <ligand>
        <name>Mn(2+)</name>
        <dbReference type="ChEBI" id="CHEBI:29035"/>
    </ligand>
</feature>
<feature type="binding site" evidence="1">
    <location>
        <position position="350"/>
    </location>
    <ligand>
        <name>Mn(2+)</name>
        <dbReference type="ChEBI" id="CHEBI:29035"/>
    </ligand>
</feature>
<feature type="binding site" evidence="1">
    <location>
        <position position="450"/>
    </location>
    <ligand>
        <name>Mn(2+)</name>
        <dbReference type="ChEBI" id="CHEBI:29035"/>
    </ligand>
</feature>
<dbReference type="EC" id="5.3.1.4" evidence="1"/>
<dbReference type="EMBL" id="CP000802">
    <property type="protein sequence ID" value="ABV04466.1"/>
    <property type="molecule type" value="Genomic_DNA"/>
</dbReference>
<dbReference type="RefSeq" id="WP_000151734.1">
    <property type="nucleotide sequence ID" value="NC_009800.1"/>
</dbReference>
<dbReference type="SMR" id="A7ZW12"/>
<dbReference type="GeneID" id="93777375"/>
<dbReference type="KEGG" id="ecx:EcHS_A0066"/>
<dbReference type="HOGENOM" id="CLU_045663_0_0_6"/>
<dbReference type="UniPathway" id="UPA00145">
    <property type="reaction ID" value="UER00565"/>
</dbReference>
<dbReference type="GO" id="GO:0005829">
    <property type="term" value="C:cytosol"/>
    <property type="evidence" value="ECO:0007669"/>
    <property type="project" value="TreeGrafter"/>
</dbReference>
<dbReference type="GO" id="GO:0008733">
    <property type="term" value="F:L-arabinose isomerase activity"/>
    <property type="evidence" value="ECO:0007669"/>
    <property type="project" value="UniProtKB-UniRule"/>
</dbReference>
<dbReference type="GO" id="GO:0030145">
    <property type="term" value="F:manganese ion binding"/>
    <property type="evidence" value="ECO:0007669"/>
    <property type="project" value="UniProtKB-UniRule"/>
</dbReference>
<dbReference type="GO" id="GO:0019569">
    <property type="term" value="P:L-arabinose catabolic process to xylulose 5-phosphate"/>
    <property type="evidence" value="ECO:0007669"/>
    <property type="project" value="UniProtKB-UniRule"/>
</dbReference>
<dbReference type="CDD" id="cd03557">
    <property type="entry name" value="L-arabinose_isomerase"/>
    <property type="match status" value="1"/>
</dbReference>
<dbReference type="FunFam" id="3.40.50.10940:FF:000001">
    <property type="entry name" value="L-arabinose isomerase"/>
    <property type="match status" value="1"/>
</dbReference>
<dbReference type="Gene3D" id="3.40.50.10940">
    <property type="match status" value="1"/>
</dbReference>
<dbReference type="HAMAP" id="MF_00519">
    <property type="entry name" value="Arabinose_Isome"/>
    <property type="match status" value="1"/>
</dbReference>
<dbReference type="InterPro" id="IPR024664">
    <property type="entry name" value="Ara_Isoase_C"/>
</dbReference>
<dbReference type="InterPro" id="IPR055390">
    <property type="entry name" value="AraA_central"/>
</dbReference>
<dbReference type="InterPro" id="IPR055389">
    <property type="entry name" value="AraA_N"/>
</dbReference>
<dbReference type="InterPro" id="IPR038583">
    <property type="entry name" value="AraA_N_sf"/>
</dbReference>
<dbReference type="InterPro" id="IPR004216">
    <property type="entry name" value="Fuc/Ara_isomerase_C"/>
</dbReference>
<dbReference type="InterPro" id="IPR009015">
    <property type="entry name" value="Fucose_isomerase_N/cen_sf"/>
</dbReference>
<dbReference type="InterPro" id="IPR003762">
    <property type="entry name" value="Lara_isomerase"/>
</dbReference>
<dbReference type="NCBIfam" id="NF002795">
    <property type="entry name" value="PRK02929.1"/>
    <property type="match status" value="1"/>
</dbReference>
<dbReference type="PANTHER" id="PTHR38464">
    <property type="entry name" value="L-ARABINOSE ISOMERASE"/>
    <property type="match status" value="1"/>
</dbReference>
<dbReference type="PANTHER" id="PTHR38464:SF1">
    <property type="entry name" value="L-ARABINOSE ISOMERASE"/>
    <property type="match status" value="1"/>
</dbReference>
<dbReference type="Pfam" id="PF24856">
    <property type="entry name" value="AraA_central"/>
    <property type="match status" value="1"/>
</dbReference>
<dbReference type="Pfam" id="PF02610">
    <property type="entry name" value="AraA_N"/>
    <property type="match status" value="1"/>
</dbReference>
<dbReference type="Pfam" id="PF11762">
    <property type="entry name" value="Arabinose_Iso_C"/>
    <property type="match status" value="1"/>
</dbReference>
<dbReference type="PIRSF" id="PIRSF001478">
    <property type="entry name" value="L-ara_isomerase"/>
    <property type="match status" value="1"/>
</dbReference>
<dbReference type="SUPFAM" id="SSF50443">
    <property type="entry name" value="FucI/AraA C-terminal domain-like"/>
    <property type="match status" value="1"/>
</dbReference>
<dbReference type="SUPFAM" id="SSF53743">
    <property type="entry name" value="FucI/AraA N-terminal and middle domains"/>
    <property type="match status" value="1"/>
</dbReference>
<gene>
    <name evidence="1" type="primary">araA</name>
    <name type="ordered locus">EcHS_A0066</name>
</gene>
<organism>
    <name type="scientific">Escherichia coli O9:H4 (strain HS)</name>
    <dbReference type="NCBI Taxonomy" id="331112"/>
    <lineage>
        <taxon>Bacteria</taxon>
        <taxon>Pseudomonadati</taxon>
        <taxon>Pseudomonadota</taxon>
        <taxon>Gammaproteobacteria</taxon>
        <taxon>Enterobacterales</taxon>
        <taxon>Enterobacteriaceae</taxon>
        <taxon>Escherichia</taxon>
    </lineage>
</organism>
<keyword id="KW-0054">Arabinose catabolism</keyword>
<keyword id="KW-0119">Carbohydrate metabolism</keyword>
<keyword id="KW-0413">Isomerase</keyword>
<keyword id="KW-0464">Manganese</keyword>
<keyword id="KW-0479">Metal-binding</keyword>
<comment type="function">
    <text evidence="1">Catalyzes the conversion of L-arabinose to L-ribulose.</text>
</comment>
<comment type="catalytic activity">
    <reaction evidence="1">
        <text>beta-L-arabinopyranose = L-ribulose</text>
        <dbReference type="Rhea" id="RHEA:14821"/>
        <dbReference type="ChEBI" id="CHEBI:16880"/>
        <dbReference type="ChEBI" id="CHEBI:40886"/>
        <dbReference type="EC" id="5.3.1.4"/>
    </reaction>
</comment>
<comment type="cofactor">
    <cofactor evidence="1">
        <name>Mn(2+)</name>
        <dbReference type="ChEBI" id="CHEBI:29035"/>
    </cofactor>
    <text evidence="1">Binds 1 Mn(2+) ion per subunit.</text>
</comment>
<comment type="pathway">
    <text evidence="1">Carbohydrate degradation; L-arabinose degradation via L-ribulose; D-xylulose 5-phosphate from L-arabinose (bacterial route): step 1/3.</text>
</comment>
<comment type="subunit">
    <text evidence="1">Homohexamer.</text>
</comment>
<comment type="similarity">
    <text evidence="1">Belongs to the arabinose isomerase family.</text>
</comment>
<name>ARAA_ECOHS</name>
<reference key="1">
    <citation type="journal article" date="2008" name="J. Bacteriol.">
        <title>The pangenome structure of Escherichia coli: comparative genomic analysis of E. coli commensal and pathogenic isolates.</title>
        <authorList>
            <person name="Rasko D.A."/>
            <person name="Rosovitz M.J."/>
            <person name="Myers G.S.A."/>
            <person name="Mongodin E.F."/>
            <person name="Fricke W.F."/>
            <person name="Gajer P."/>
            <person name="Crabtree J."/>
            <person name="Sebaihia M."/>
            <person name="Thomson N.R."/>
            <person name="Chaudhuri R."/>
            <person name="Henderson I.R."/>
            <person name="Sperandio V."/>
            <person name="Ravel J."/>
        </authorList>
    </citation>
    <scope>NUCLEOTIDE SEQUENCE [LARGE SCALE GENOMIC DNA]</scope>
    <source>
        <strain>HS</strain>
    </source>
</reference>
<protein>
    <recommendedName>
        <fullName evidence="1">L-arabinose isomerase</fullName>
        <ecNumber evidence="1">5.3.1.4</ecNumber>
    </recommendedName>
</protein>
<sequence>MTIFDNYEVWFVIGSQHLYGPETLRQVTQHAEHVVNALNTEAKLPCKLVLKPLGTTPDEITAICRDANYDDRCAGLVVWLHTFSPAKMWINGLTMLNKPLLQFHTQFNAALPWDSIDMDFMNLNQTAHGGREFGFIGARMRQQHAVVTGHWQDKQAHERIGSWMRQAVSKQDTRHLKVCRFGDNMREVAVTDGDKVAAQIKFGFSVNTWAVGDLVQVVNSISDGDVNALVDEYESCYTMTPATQIHGEKRQNVLEAARIELGMKRFLEQGGFHAFTTTFEDLHGLKQLPGLAVQRLMQQGYGFAGEGDWKTAALLRIMKVMSTGLQGGTSFMEDYTYHFEKGNDLVLGSHMLEVCPSIAVEEKPILDVQHLGIGGKDDPARLIFNTQTGPAIVASLIDLGDRYRLLVNCIDTVKTPHSLPKLPVANALWKAQPDLPTASEAWILAGGAHHTVFSHALNLNDMRQFAEMHDIEITVIDNDTRLPAFKDALRWNEVYYGFRR</sequence>
<proteinExistence type="inferred from homology"/>